<keyword id="KW-0028">Amino-acid biosynthesis</keyword>
<keyword id="KW-0032">Aminotransferase</keyword>
<keyword id="KW-0368">Histidine biosynthesis</keyword>
<keyword id="KW-0663">Pyridoxal phosphate</keyword>
<keyword id="KW-0808">Transferase</keyword>
<feature type="chain" id="PRO_0000153341" description="Histidinol-phosphate aminotransferase">
    <location>
        <begin position="1"/>
        <end position="364"/>
    </location>
</feature>
<feature type="modified residue" description="N6-(pyridoxal phosphate)lysine" evidence="1">
    <location>
        <position position="226"/>
    </location>
</feature>
<organism>
    <name type="scientific">Campylobacter jejuni (strain RM1221)</name>
    <dbReference type="NCBI Taxonomy" id="195099"/>
    <lineage>
        <taxon>Bacteria</taxon>
        <taxon>Pseudomonadati</taxon>
        <taxon>Campylobacterota</taxon>
        <taxon>Epsilonproteobacteria</taxon>
        <taxon>Campylobacterales</taxon>
        <taxon>Campylobacteraceae</taxon>
        <taxon>Campylobacter</taxon>
    </lineage>
</organism>
<proteinExistence type="inferred from homology"/>
<gene>
    <name evidence="1" type="primary">hisC</name>
    <name type="ordered locus">CJE0362</name>
</gene>
<accession>Q5HWF4</accession>
<evidence type="ECO:0000255" key="1">
    <source>
        <dbReference type="HAMAP-Rule" id="MF_01023"/>
    </source>
</evidence>
<protein>
    <recommendedName>
        <fullName evidence="1">Histidinol-phosphate aminotransferase</fullName>
        <ecNumber evidence="1">2.6.1.9</ecNumber>
    </recommendedName>
    <alternativeName>
        <fullName evidence="1">Imidazole acetol-phosphate transaminase</fullName>
    </alternativeName>
</protein>
<sequence>MKFNEFLNHLSNYEPGKDIEVIAKEYGVKEVIKLASNENPFGTPPKAIECLRQNANKAHLYPDDSMIELKSTLAQKYKVQNENIIIGAGSDQVIEFAIHAKLNSKNAFLQAGVTFAMYEIYAKQCGAKCYKTQSITHDLNEFKKLYEAHKDEIKLIFLCLPNNPLGECLDASEVTKFIKGVDEDCLVVIDAAYNEFASFKDSKKHLEPCELIKEFDNVLYLGTFSKLYGLGGLRIGYGIANANIISAFYKLRAPFNVSNLALKAAVAAINDDEFAKKTLENNFSQMELYKEFAKKHNIKIIDSYTNFITYFFNEKNSTDLSEKLLKKGIIIRNLKSYGLNAIRITIGTSYENEKFFTEFDKILR</sequence>
<comment type="catalytic activity">
    <reaction evidence="1">
        <text>L-histidinol phosphate + 2-oxoglutarate = 3-(imidazol-4-yl)-2-oxopropyl phosphate + L-glutamate</text>
        <dbReference type="Rhea" id="RHEA:23744"/>
        <dbReference type="ChEBI" id="CHEBI:16810"/>
        <dbReference type="ChEBI" id="CHEBI:29985"/>
        <dbReference type="ChEBI" id="CHEBI:57766"/>
        <dbReference type="ChEBI" id="CHEBI:57980"/>
        <dbReference type="EC" id="2.6.1.9"/>
    </reaction>
</comment>
<comment type="cofactor">
    <cofactor evidence="1">
        <name>pyridoxal 5'-phosphate</name>
        <dbReference type="ChEBI" id="CHEBI:597326"/>
    </cofactor>
</comment>
<comment type="pathway">
    <text evidence="1">Amino-acid biosynthesis; L-histidine biosynthesis; L-histidine from 5-phospho-alpha-D-ribose 1-diphosphate: step 7/9.</text>
</comment>
<comment type="subunit">
    <text evidence="1">Homodimer.</text>
</comment>
<comment type="similarity">
    <text evidence="1">Belongs to the class-II pyridoxal-phosphate-dependent aminotransferase family. Histidinol-phosphate aminotransferase subfamily.</text>
</comment>
<name>HIS8_CAMJR</name>
<dbReference type="EC" id="2.6.1.9" evidence="1"/>
<dbReference type="EMBL" id="CP000025">
    <property type="protein sequence ID" value="AAW34951.1"/>
    <property type="molecule type" value="Genomic_DNA"/>
</dbReference>
<dbReference type="RefSeq" id="WP_002867750.1">
    <property type="nucleotide sequence ID" value="NC_003912.7"/>
</dbReference>
<dbReference type="SMR" id="Q5HWF4"/>
<dbReference type="KEGG" id="cjr:CJE0362"/>
<dbReference type="HOGENOM" id="CLU_017584_3_3_7"/>
<dbReference type="UniPathway" id="UPA00031">
    <property type="reaction ID" value="UER00012"/>
</dbReference>
<dbReference type="GO" id="GO:0004400">
    <property type="term" value="F:histidinol-phosphate transaminase activity"/>
    <property type="evidence" value="ECO:0007669"/>
    <property type="project" value="UniProtKB-UniRule"/>
</dbReference>
<dbReference type="GO" id="GO:0030170">
    <property type="term" value="F:pyridoxal phosphate binding"/>
    <property type="evidence" value="ECO:0007669"/>
    <property type="project" value="InterPro"/>
</dbReference>
<dbReference type="GO" id="GO:0000105">
    <property type="term" value="P:L-histidine biosynthetic process"/>
    <property type="evidence" value="ECO:0007669"/>
    <property type="project" value="UniProtKB-UniRule"/>
</dbReference>
<dbReference type="CDD" id="cd00609">
    <property type="entry name" value="AAT_like"/>
    <property type="match status" value="1"/>
</dbReference>
<dbReference type="Gene3D" id="3.90.1150.10">
    <property type="entry name" value="Aspartate Aminotransferase, domain 1"/>
    <property type="match status" value="1"/>
</dbReference>
<dbReference type="Gene3D" id="3.40.640.10">
    <property type="entry name" value="Type I PLP-dependent aspartate aminotransferase-like (Major domain)"/>
    <property type="match status" value="1"/>
</dbReference>
<dbReference type="HAMAP" id="MF_01023">
    <property type="entry name" value="HisC_aminotrans_2"/>
    <property type="match status" value="1"/>
</dbReference>
<dbReference type="InterPro" id="IPR004839">
    <property type="entry name" value="Aminotransferase_I/II_large"/>
</dbReference>
<dbReference type="InterPro" id="IPR005861">
    <property type="entry name" value="HisP_aminotrans"/>
</dbReference>
<dbReference type="InterPro" id="IPR050106">
    <property type="entry name" value="HistidinolP_aminotransfase"/>
</dbReference>
<dbReference type="InterPro" id="IPR015424">
    <property type="entry name" value="PyrdxlP-dep_Trfase"/>
</dbReference>
<dbReference type="InterPro" id="IPR015421">
    <property type="entry name" value="PyrdxlP-dep_Trfase_major"/>
</dbReference>
<dbReference type="InterPro" id="IPR015422">
    <property type="entry name" value="PyrdxlP-dep_Trfase_small"/>
</dbReference>
<dbReference type="NCBIfam" id="TIGR01141">
    <property type="entry name" value="hisC"/>
    <property type="match status" value="1"/>
</dbReference>
<dbReference type="PANTHER" id="PTHR43643:SF3">
    <property type="entry name" value="HISTIDINOL-PHOSPHATE AMINOTRANSFERASE"/>
    <property type="match status" value="1"/>
</dbReference>
<dbReference type="PANTHER" id="PTHR43643">
    <property type="entry name" value="HISTIDINOL-PHOSPHATE AMINOTRANSFERASE 2"/>
    <property type="match status" value="1"/>
</dbReference>
<dbReference type="Pfam" id="PF00155">
    <property type="entry name" value="Aminotran_1_2"/>
    <property type="match status" value="1"/>
</dbReference>
<dbReference type="SUPFAM" id="SSF53383">
    <property type="entry name" value="PLP-dependent transferases"/>
    <property type="match status" value="1"/>
</dbReference>
<reference key="1">
    <citation type="journal article" date="2005" name="PLoS Biol.">
        <title>Major structural differences and novel potential virulence mechanisms from the genomes of multiple Campylobacter species.</title>
        <authorList>
            <person name="Fouts D.E."/>
            <person name="Mongodin E.F."/>
            <person name="Mandrell R.E."/>
            <person name="Miller W.G."/>
            <person name="Rasko D.A."/>
            <person name="Ravel J."/>
            <person name="Brinkac L.M."/>
            <person name="DeBoy R.T."/>
            <person name="Parker C.T."/>
            <person name="Daugherty S.C."/>
            <person name="Dodson R.J."/>
            <person name="Durkin A.S."/>
            <person name="Madupu R."/>
            <person name="Sullivan S.A."/>
            <person name="Shetty J.U."/>
            <person name="Ayodeji M.A."/>
            <person name="Shvartsbeyn A."/>
            <person name="Schatz M.C."/>
            <person name="Badger J.H."/>
            <person name="Fraser C.M."/>
            <person name="Nelson K.E."/>
        </authorList>
    </citation>
    <scope>NUCLEOTIDE SEQUENCE [LARGE SCALE GENOMIC DNA]</scope>
    <source>
        <strain>RM1221</strain>
    </source>
</reference>